<comment type="similarity">
    <text evidence="1">Belongs to the bacterial ribosomal protein bS16 family.</text>
</comment>
<protein>
    <recommendedName>
        <fullName evidence="1">Small ribosomal subunit protein bS16</fullName>
    </recommendedName>
    <alternativeName>
        <fullName evidence="2">30S ribosomal protein S16</fullName>
    </alternativeName>
</protein>
<dbReference type="EMBL" id="CP000853">
    <property type="protein sequence ID" value="ABW19008.1"/>
    <property type="molecule type" value="Genomic_DNA"/>
</dbReference>
<dbReference type="RefSeq" id="WP_012159320.1">
    <property type="nucleotide sequence ID" value="NC_009922.1"/>
</dbReference>
<dbReference type="SMR" id="A8MHC1"/>
<dbReference type="STRING" id="350688.Clos_1464"/>
<dbReference type="KEGG" id="aoe:Clos_1464"/>
<dbReference type="eggNOG" id="COG0228">
    <property type="taxonomic scope" value="Bacteria"/>
</dbReference>
<dbReference type="HOGENOM" id="CLU_100590_5_0_9"/>
<dbReference type="OrthoDB" id="9807878at2"/>
<dbReference type="Proteomes" id="UP000000269">
    <property type="component" value="Chromosome"/>
</dbReference>
<dbReference type="GO" id="GO:0005737">
    <property type="term" value="C:cytoplasm"/>
    <property type="evidence" value="ECO:0007669"/>
    <property type="project" value="UniProtKB-ARBA"/>
</dbReference>
<dbReference type="GO" id="GO:0015935">
    <property type="term" value="C:small ribosomal subunit"/>
    <property type="evidence" value="ECO:0007669"/>
    <property type="project" value="TreeGrafter"/>
</dbReference>
<dbReference type="GO" id="GO:0003735">
    <property type="term" value="F:structural constituent of ribosome"/>
    <property type="evidence" value="ECO:0007669"/>
    <property type="project" value="InterPro"/>
</dbReference>
<dbReference type="GO" id="GO:0006412">
    <property type="term" value="P:translation"/>
    <property type="evidence" value="ECO:0007669"/>
    <property type="project" value="UniProtKB-UniRule"/>
</dbReference>
<dbReference type="FunFam" id="3.30.1320.10:FF:000002">
    <property type="entry name" value="30S ribosomal protein S16"/>
    <property type="match status" value="1"/>
</dbReference>
<dbReference type="Gene3D" id="3.30.1320.10">
    <property type="match status" value="1"/>
</dbReference>
<dbReference type="HAMAP" id="MF_00385">
    <property type="entry name" value="Ribosomal_bS16"/>
    <property type="match status" value="1"/>
</dbReference>
<dbReference type="InterPro" id="IPR000307">
    <property type="entry name" value="Ribosomal_bS16"/>
</dbReference>
<dbReference type="InterPro" id="IPR020592">
    <property type="entry name" value="Ribosomal_bS16_CS"/>
</dbReference>
<dbReference type="InterPro" id="IPR023803">
    <property type="entry name" value="Ribosomal_bS16_dom_sf"/>
</dbReference>
<dbReference type="NCBIfam" id="TIGR00002">
    <property type="entry name" value="S16"/>
    <property type="match status" value="1"/>
</dbReference>
<dbReference type="PANTHER" id="PTHR12919">
    <property type="entry name" value="30S RIBOSOMAL PROTEIN S16"/>
    <property type="match status" value="1"/>
</dbReference>
<dbReference type="PANTHER" id="PTHR12919:SF20">
    <property type="entry name" value="SMALL RIBOSOMAL SUBUNIT PROTEIN BS16M"/>
    <property type="match status" value="1"/>
</dbReference>
<dbReference type="Pfam" id="PF00886">
    <property type="entry name" value="Ribosomal_S16"/>
    <property type="match status" value="1"/>
</dbReference>
<dbReference type="SUPFAM" id="SSF54565">
    <property type="entry name" value="Ribosomal protein S16"/>
    <property type="match status" value="1"/>
</dbReference>
<dbReference type="PROSITE" id="PS00732">
    <property type="entry name" value="RIBOSOMAL_S16"/>
    <property type="match status" value="1"/>
</dbReference>
<organism>
    <name type="scientific">Alkaliphilus oremlandii (strain OhILAs)</name>
    <name type="common">Clostridium oremlandii (strain OhILAs)</name>
    <dbReference type="NCBI Taxonomy" id="350688"/>
    <lineage>
        <taxon>Bacteria</taxon>
        <taxon>Bacillati</taxon>
        <taxon>Bacillota</taxon>
        <taxon>Clostridia</taxon>
        <taxon>Peptostreptococcales</taxon>
        <taxon>Natronincolaceae</taxon>
        <taxon>Alkaliphilus</taxon>
    </lineage>
</organism>
<accession>A8MHC1</accession>
<feature type="chain" id="PRO_1000060705" description="Small ribosomal subunit protein bS16">
    <location>
        <begin position="1"/>
        <end position="81"/>
    </location>
</feature>
<proteinExistence type="inferred from homology"/>
<evidence type="ECO:0000255" key="1">
    <source>
        <dbReference type="HAMAP-Rule" id="MF_00385"/>
    </source>
</evidence>
<evidence type="ECO:0000305" key="2"/>
<keyword id="KW-1185">Reference proteome</keyword>
<keyword id="KW-0687">Ribonucleoprotein</keyword>
<keyword id="KW-0689">Ribosomal protein</keyword>
<reference key="1">
    <citation type="submission" date="2007-10" db="EMBL/GenBank/DDBJ databases">
        <title>Complete genome of Alkaliphilus oremlandii OhILAs.</title>
        <authorList>
            <person name="Copeland A."/>
            <person name="Lucas S."/>
            <person name="Lapidus A."/>
            <person name="Barry K."/>
            <person name="Detter J.C."/>
            <person name="Glavina del Rio T."/>
            <person name="Hammon N."/>
            <person name="Israni S."/>
            <person name="Dalin E."/>
            <person name="Tice H."/>
            <person name="Pitluck S."/>
            <person name="Chain P."/>
            <person name="Malfatti S."/>
            <person name="Shin M."/>
            <person name="Vergez L."/>
            <person name="Schmutz J."/>
            <person name="Larimer F."/>
            <person name="Land M."/>
            <person name="Hauser L."/>
            <person name="Kyrpides N."/>
            <person name="Mikhailova N."/>
            <person name="Stolz J.F."/>
            <person name="Dawson A."/>
            <person name="Fisher E."/>
            <person name="Crable B."/>
            <person name="Perera E."/>
            <person name="Lisak J."/>
            <person name="Ranganathan M."/>
            <person name="Basu P."/>
            <person name="Richardson P."/>
        </authorList>
    </citation>
    <scope>NUCLEOTIDE SEQUENCE [LARGE SCALE GENOMIC DNA]</scope>
    <source>
        <strain>OhILAs</strain>
    </source>
</reference>
<sequence>MAVKIRLKRMGAHKKPFYRIVVADARSPRDGRFIEEIGYYNPVSEPKEIKINNEKAEKWLKNGAQPTDTVKDLFKKNGIIE</sequence>
<gene>
    <name evidence="1" type="primary">rpsP</name>
    <name type="ordered locus">Clos_1464</name>
</gene>
<name>RS16_ALKOO</name>